<comment type="function">
    <text evidence="1">Part of a stress-induced multi-chaperone system, it is involved in the recovery of the cell from heat-induced damage, in cooperation with DnaK, DnaJ and GrpE. Acts before DnaK, in the processing of protein aggregates. Protein binding stimulates the ATPase activity; ATP hydrolysis unfolds the denatured protein aggregates, which probably helps expose new hydrophobic binding sites on the surface of ClpB-bound aggregates, contributing to the solubilization and refolding of denatured protein aggregates by DnaK (By similarity).</text>
</comment>
<comment type="subunit">
    <text evidence="1">Homohexamer. The oligomerization is ATP-dependent (By similarity).</text>
</comment>
<comment type="subcellular location">
    <subcellularLocation>
        <location evidence="3">Cytoplasm</location>
    </subcellularLocation>
</comment>
<comment type="domain">
    <text evidence="1">The Clp repeat (R) domain probably functions as a substrate-discriminating domain, recruiting aggregated proteins to the ClpB hexamer and/or stabilizing bound proteins. The NBD2 domain is responsible for oligomerization, whereas the NBD1 domain stabilizes the hexamer probably in an ATP-dependent manner. The movement of the coiled-coil domain is essential for ClpB ability to rescue proteins from an aggregated state, probably by pulling apart large aggregated proteins, which are bound between the coiled-coils motifs of adjacent ClpB subunits in the functional hexamer (By similarity).</text>
</comment>
<comment type="similarity">
    <text evidence="3">Belongs to the ClpA/ClpB family.</text>
</comment>
<proteinExistence type="inferred from homology"/>
<keyword id="KW-0067">ATP-binding</keyword>
<keyword id="KW-0143">Chaperone</keyword>
<keyword id="KW-0175">Coiled coil</keyword>
<keyword id="KW-0963">Cytoplasm</keyword>
<keyword id="KW-0547">Nucleotide-binding</keyword>
<keyword id="KW-1185">Reference proteome</keyword>
<keyword id="KW-0677">Repeat</keyword>
<keyword id="KW-0346">Stress response</keyword>
<dbReference type="EMBL" id="AE015451">
    <property type="protein sequence ID" value="AAN66250.1"/>
    <property type="molecule type" value="Genomic_DNA"/>
</dbReference>
<dbReference type="RefSeq" id="NP_742786.1">
    <property type="nucleotide sequence ID" value="NC_002947.4"/>
</dbReference>
<dbReference type="RefSeq" id="WP_010951887.1">
    <property type="nucleotide sequence ID" value="NZ_CP169744.1"/>
</dbReference>
<dbReference type="SMR" id="Q88Q71"/>
<dbReference type="STRING" id="160488.PP_0625"/>
<dbReference type="PaxDb" id="160488-PP_0625"/>
<dbReference type="GeneID" id="83677956"/>
<dbReference type="KEGG" id="ppu:PP_0625"/>
<dbReference type="PATRIC" id="fig|160488.4.peg.666"/>
<dbReference type="eggNOG" id="COG0542">
    <property type="taxonomic scope" value="Bacteria"/>
</dbReference>
<dbReference type="HOGENOM" id="CLU_005070_4_0_6"/>
<dbReference type="OrthoDB" id="9803641at2"/>
<dbReference type="PhylomeDB" id="Q88Q71"/>
<dbReference type="BioCyc" id="PPUT160488:G1G01-682-MONOMER"/>
<dbReference type="Proteomes" id="UP000000556">
    <property type="component" value="Chromosome"/>
</dbReference>
<dbReference type="GO" id="GO:0005737">
    <property type="term" value="C:cytoplasm"/>
    <property type="evidence" value="ECO:0007669"/>
    <property type="project" value="UniProtKB-SubCell"/>
</dbReference>
<dbReference type="GO" id="GO:0005524">
    <property type="term" value="F:ATP binding"/>
    <property type="evidence" value="ECO:0007669"/>
    <property type="project" value="UniProtKB-KW"/>
</dbReference>
<dbReference type="GO" id="GO:0016887">
    <property type="term" value="F:ATP hydrolysis activity"/>
    <property type="evidence" value="ECO:0007669"/>
    <property type="project" value="InterPro"/>
</dbReference>
<dbReference type="GO" id="GO:0034605">
    <property type="term" value="P:cellular response to heat"/>
    <property type="evidence" value="ECO:0007669"/>
    <property type="project" value="TreeGrafter"/>
</dbReference>
<dbReference type="GO" id="GO:0042026">
    <property type="term" value="P:protein refolding"/>
    <property type="evidence" value="ECO:0007669"/>
    <property type="project" value="InterPro"/>
</dbReference>
<dbReference type="GO" id="GO:0006355">
    <property type="term" value="P:regulation of DNA-templated transcription"/>
    <property type="evidence" value="ECO:0007669"/>
    <property type="project" value="InterPro"/>
</dbReference>
<dbReference type="CDD" id="cd00009">
    <property type="entry name" value="AAA"/>
    <property type="match status" value="1"/>
</dbReference>
<dbReference type="CDD" id="cd19499">
    <property type="entry name" value="RecA-like_ClpB_Hsp104-like"/>
    <property type="match status" value="1"/>
</dbReference>
<dbReference type="FunFam" id="1.10.1780.10:FF:000003">
    <property type="entry name" value="ATP-dependent chaperone ClpB"/>
    <property type="match status" value="1"/>
</dbReference>
<dbReference type="FunFam" id="1.10.8.60:FF:000017">
    <property type="entry name" value="ATP-dependent chaperone ClpB"/>
    <property type="match status" value="1"/>
</dbReference>
<dbReference type="FunFam" id="3.40.50.300:FF:000120">
    <property type="entry name" value="ATP-dependent chaperone ClpB"/>
    <property type="match status" value="1"/>
</dbReference>
<dbReference type="FunFam" id="3.40.50.300:FF:000025">
    <property type="entry name" value="ATP-dependent Clp protease subunit"/>
    <property type="match status" value="1"/>
</dbReference>
<dbReference type="FunFam" id="3.40.50.300:FF:000010">
    <property type="entry name" value="Chaperone clpB 1, putative"/>
    <property type="match status" value="1"/>
</dbReference>
<dbReference type="Gene3D" id="1.10.8.60">
    <property type="match status" value="1"/>
</dbReference>
<dbReference type="Gene3D" id="1.10.1780.10">
    <property type="entry name" value="Clp, N-terminal domain"/>
    <property type="match status" value="1"/>
</dbReference>
<dbReference type="Gene3D" id="3.40.50.300">
    <property type="entry name" value="P-loop containing nucleotide triphosphate hydrolases"/>
    <property type="match status" value="3"/>
</dbReference>
<dbReference type="InterPro" id="IPR003593">
    <property type="entry name" value="AAA+_ATPase"/>
</dbReference>
<dbReference type="InterPro" id="IPR003959">
    <property type="entry name" value="ATPase_AAA_core"/>
</dbReference>
<dbReference type="InterPro" id="IPR017730">
    <property type="entry name" value="Chaperonin_ClpB"/>
</dbReference>
<dbReference type="InterPro" id="IPR019489">
    <property type="entry name" value="Clp_ATPase_C"/>
</dbReference>
<dbReference type="InterPro" id="IPR036628">
    <property type="entry name" value="Clp_N_dom_sf"/>
</dbReference>
<dbReference type="InterPro" id="IPR004176">
    <property type="entry name" value="Clp_R_dom"/>
</dbReference>
<dbReference type="InterPro" id="IPR001270">
    <property type="entry name" value="ClpA/B"/>
</dbReference>
<dbReference type="InterPro" id="IPR018368">
    <property type="entry name" value="ClpA/B_CS1"/>
</dbReference>
<dbReference type="InterPro" id="IPR028299">
    <property type="entry name" value="ClpA/B_CS2"/>
</dbReference>
<dbReference type="InterPro" id="IPR041546">
    <property type="entry name" value="ClpA/ClpB_AAA_lid"/>
</dbReference>
<dbReference type="InterPro" id="IPR050130">
    <property type="entry name" value="ClpA_ClpB"/>
</dbReference>
<dbReference type="InterPro" id="IPR027417">
    <property type="entry name" value="P-loop_NTPase"/>
</dbReference>
<dbReference type="InterPro" id="IPR002078">
    <property type="entry name" value="Sigma_54_int"/>
</dbReference>
<dbReference type="NCBIfam" id="TIGR03346">
    <property type="entry name" value="chaperone_ClpB"/>
    <property type="match status" value="1"/>
</dbReference>
<dbReference type="NCBIfam" id="NF008118">
    <property type="entry name" value="PRK10865.1"/>
    <property type="match status" value="1"/>
</dbReference>
<dbReference type="PANTHER" id="PTHR11638">
    <property type="entry name" value="ATP-DEPENDENT CLP PROTEASE"/>
    <property type="match status" value="1"/>
</dbReference>
<dbReference type="PANTHER" id="PTHR11638:SF18">
    <property type="entry name" value="HEAT SHOCK PROTEIN 104"/>
    <property type="match status" value="1"/>
</dbReference>
<dbReference type="Pfam" id="PF00004">
    <property type="entry name" value="AAA"/>
    <property type="match status" value="1"/>
</dbReference>
<dbReference type="Pfam" id="PF07724">
    <property type="entry name" value="AAA_2"/>
    <property type="match status" value="1"/>
</dbReference>
<dbReference type="Pfam" id="PF17871">
    <property type="entry name" value="AAA_lid_9"/>
    <property type="match status" value="1"/>
</dbReference>
<dbReference type="Pfam" id="PF02861">
    <property type="entry name" value="Clp_N"/>
    <property type="match status" value="2"/>
</dbReference>
<dbReference type="Pfam" id="PF10431">
    <property type="entry name" value="ClpB_D2-small"/>
    <property type="match status" value="1"/>
</dbReference>
<dbReference type="PRINTS" id="PR00300">
    <property type="entry name" value="CLPPROTEASEA"/>
</dbReference>
<dbReference type="SMART" id="SM00382">
    <property type="entry name" value="AAA"/>
    <property type="match status" value="2"/>
</dbReference>
<dbReference type="SMART" id="SM01086">
    <property type="entry name" value="ClpB_D2-small"/>
    <property type="match status" value="1"/>
</dbReference>
<dbReference type="SUPFAM" id="SSF81923">
    <property type="entry name" value="Double Clp-N motif"/>
    <property type="match status" value="1"/>
</dbReference>
<dbReference type="SUPFAM" id="SSF52540">
    <property type="entry name" value="P-loop containing nucleoside triphosphate hydrolases"/>
    <property type="match status" value="2"/>
</dbReference>
<dbReference type="PROSITE" id="PS51903">
    <property type="entry name" value="CLP_R"/>
    <property type="match status" value="1"/>
</dbReference>
<dbReference type="PROSITE" id="PS00870">
    <property type="entry name" value="CLPAB_1"/>
    <property type="match status" value="1"/>
</dbReference>
<dbReference type="PROSITE" id="PS00871">
    <property type="entry name" value="CLPAB_2"/>
    <property type="match status" value="1"/>
</dbReference>
<gene>
    <name type="primary">clpB</name>
    <name type="ordered locus">PP_0625</name>
</gene>
<protein>
    <recommendedName>
        <fullName>Chaperone protein ClpB</fullName>
    </recommendedName>
</protein>
<sequence length="854" mass="94862">MRIDRLTSKLQLAISDAQSLAVGMDHPAIEPVHLLQALLEQQGGSIKPLLMQVGFDINGLRQGLVKELDQLPKIQNPTGDVNMSQDLARLLNQADRLAQQKGDQFISSELVLLAAMDENSKLGKLLLSQGVSKKALENAINNLRGGAAVNDANAEESRQALDKYTVDLTKRAEEGKLDPVIGRDDEIRRTVQVLQRRTKNNPVLIGEPGVGKTAIAEGLAQRIINGEVPDGLKGKRLLALDMGALIAGAKYRGEFEERLKSLLNELSKQEGQIILFIDELHTMVGAGKGEGAMDAGNMLKPALARGELHCVGATTLNEYRQFIEKDAALERRFQKVLVEEPSEEDTIAILRGLKERYEVHHKVAITDGAIIAAAKLSHRYITDRQLPDKAIDLIDEAASRIRMEIDSKPEVLDRLDRRLIQLKVESQALKKEEDEAAKKRLEKLTEEIERLEREYSDLEEIWASEKAEVQGSAQIQQKIEQSRQELEAARRKGDLNRMAELQYGVIPDLERSLQMVDQHGKTDNQLLRNKVTEEEIAEVVSKWTGIPVAKMLEGEREKLLKMEELLHQRVIGQSEAVTAVANAVRRSRAGLSDPNRPSGSFLFLGPTGVGKTELCKALAEFLFDTEEAMVRIDMSEFMEKHSVARLIGAPPGYVGYEEGGYLTEAVRRKPYSVVLLDEVEKAHPDVFNVLLQVLEDGRLTDSHGRTVDFRNTVIVMTSNLGSAQIQELVGDREAQRAAVMDAVGAHFRPEFINRIDEVVVFEPLGREQIAGITEIQLGRLRSRLLERELSLSLSPEALDKLIAVGYDPVYGARPLKRAIQRWIENPLAQLILAGKFLPGTAITAKVEGDEIVFG</sequence>
<organism>
    <name type="scientific">Pseudomonas putida (strain ATCC 47054 / DSM 6125 / CFBP 8728 / NCIMB 11950 / KT2440)</name>
    <dbReference type="NCBI Taxonomy" id="160488"/>
    <lineage>
        <taxon>Bacteria</taxon>
        <taxon>Pseudomonadati</taxon>
        <taxon>Pseudomonadota</taxon>
        <taxon>Gammaproteobacteria</taxon>
        <taxon>Pseudomonadales</taxon>
        <taxon>Pseudomonadaceae</taxon>
        <taxon>Pseudomonas</taxon>
    </lineage>
</organism>
<accession>Q88Q71</accession>
<name>CLPB_PSEPK</name>
<feature type="chain" id="PRO_0000191162" description="Chaperone protein ClpB">
    <location>
        <begin position="1"/>
        <end position="854"/>
    </location>
</feature>
<feature type="domain" description="Clp R" evidence="2">
    <location>
        <begin position="3"/>
        <end position="146"/>
    </location>
</feature>
<feature type="region of interest" description="Repeat 1" evidence="2">
    <location>
        <begin position="6"/>
        <end position="71"/>
    </location>
</feature>
<feature type="region of interest" description="Repeat 2" evidence="2">
    <location>
        <begin position="83"/>
        <end position="146"/>
    </location>
</feature>
<feature type="region of interest" description="NBD1" evidence="1">
    <location>
        <begin position="159"/>
        <end position="340"/>
    </location>
</feature>
<feature type="region of interest" description="Linker" evidence="1">
    <location>
        <begin position="341"/>
        <end position="545"/>
    </location>
</feature>
<feature type="region of interest" description="NBD2" evidence="1">
    <location>
        <begin position="555"/>
        <end position="763"/>
    </location>
</feature>
<feature type="region of interest" description="C-terminal" evidence="1">
    <location>
        <begin position="764"/>
        <end position="854"/>
    </location>
</feature>
<feature type="coiled-coil region" evidence="1">
    <location>
        <begin position="391"/>
        <end position="524"/>
    </location>
</feature>
<feature type="binding site" evidence="1">
    <location>
        <begin position="206"/>
        <end position="213"/>
    </location>
    <ligand>
        <name>ATP</name>
        <dbReference type="ChEBI" id="CHEBI:30616"/>
        <label>1</label>
    </ligand>
</feature>
<feature type="binding site" evidence="1">
    <location>
        <begin position="605"/>
        <end position="612"/>
    </location>
    <ligand>
        <name>ATP</name>
        <dbReference type="ChEBI" id="CHEBI:30616"/>
        <label>2</label>
    </ligand>
</feature>
<evidence type="ECO:0000250" key="1"/>
<evidence type="ECO:0000255" key="2">
    <source>
        <dbReference type="PROSITE-ProRule" id="PRU01251"/>
    </source>
</evidence>
<evidence type="ECO:0000305" key="3"/>
<reference key="1">
    <citation type="journal article" date="2002" name="Environ. Microbiol.">
        <title>Complete genome sequence and comparative analysis of the metabolically versatile Pseudomonas putida KT2440.</title>
        <authorList>
            <person name="Nelson K.E."/>
            <person name="Weinel C."/>
            <person name="Paulsen I.T."/>
            <person name="Dodson R.J."/>
            <person name="Hilbert H."/>
            <person name="Martins dos Santos V.A.P."/>
            <person name="Fouts D.E."/>
            <person name="Gill S.R."/>
            <person name="Pop M."/>
            <person name="Holmes M."/>
            <person name="Brinkac L.M."/>
            <person name="Beanan M.J."/>
            <person name="DeBoy R.T."/>
            <person name="Daugherty S.C."/>
            <person name="Kolonay J.F."/>
            <person name="Madupu R."/>
            <person name="Nelson W.C."/>
            <person name="White O."/>
            <person name="Peterson J.D."/>
            <person name="Khouri H.M."/>
            <person name="Hance I."/>
            <person name="Chris Lee P."/>
            <person name="Holtzapple E.K."/>
            <person name="Scanlan D."/>
            <person name="Tran K."/>
            <person name="Moazzez A."/>
            <person name="Utterback T.R."/>
            <person name="Rizzo M."/>
            <person name="Lee K."/>
            <person name="Kosack D."/>
            <person name="Moestl D."/>
            <person name="Wedler H."/>
            <person name="Lauber J."/>
            <person name="Stjepandic D."/>
            <person name="Hoheisel J."/>
            <person name="Straetz M."/>
            <person name="Heim S."/>
            <person name="Kiewitz C."/>
            <person name="Eisen J.A."/>
            <person name="Timmis K.N."/>
            <person name="Duesterhoeft A."/>
            <person name="Tuemmler B."/>
            <person name="Fraser C.M."/>
        </authorList>
    </citation>
    <scope>NUCLEOTIDE SEQUENCE [LARGE SCALE GENOMIC DNA]</scope>
    <source>
        <strain>ATCC 47054 / DSM 6125 / CFBP 8728 / NCIMB 11950 / KT2440</strain>
    </source>
</reference>